<name>HMGX4_HUMAN</name>
<evidence type="ECO:0000250" key="1"/>
<evidence type="ECO:0000255" key="2">
    <source>
        <dbReference type="PROSITE-ProRule" id="PRU00267"/>
    </source>
</evidence>
<evidence type="ECO:0000256" key="3">
    <source>
        <dbReference type="SAM" id="MobiDB-lite"/>
    </source>
</evidence>
<evidence type="ECO:0000305" key="4"/>
<evidence type="ECO:0007744" key="5">
    <source>
    </source>
</evidence>
<evidence type="ECO:0007744" key="6">
    <source>
    </source>
</evidence>
<evidence type="ECO:0007744" key="7">
    <source>
    </source>
</evidence>
<evidence type="ECO:0007744" key="8">
    <source>
    </source>
</evidence>
<organism>
    <name type="scientific">Homo sapiens</name>
    <name type="common">Human</name>
    <dbReference type="NCBI Taxonomy" id="9606"/>
    <lineage>
        <taxon>Eukaryota</taxon>
        <taxon>Metazoa</taxon>
        <taxon>Chordata</taxon>
        <taxon>Craniata</taxon>
        <taxon>Vertebrata</taxon>
        <taxon>Euteleostomi</taxon>
        <taxon>Mammalia</taxon>
        <taxon>Eutheria</taxon>
        <taxon>Euarchontoglires</taxon>
        <taxon>Primates</taxon>
        <taxon>Haplorrhini</taxon>
        <taxon>Catarrhini</taxon>
        <taxon>Hominidae</taxon>
        <taxon>Homo</taxon>
    </lineage>
</organism>
<proteinExistence type="evidence at protein level"/>
<sequence>MAYDDSVKKEDCFDGDHTFEDIGLAAGRSQREKKRSYKDFLREEEEIAAQVRNSSKKKLKDSELYFLGTDTHKKKRKHSSDDYYYGDISSLESSQKKKKKSSPQSTDTAMDLLKAITSPLAAGSKPSKKTGEKSSGSSSHSESKKEHHRKKVSGSSGELPLEDGGSHKSKKMKPLYVNTETLTLREPDGLKMKLILSPKEKGSSSVDEESFQYPSQQATVKKSSKKSARDEQGALLLGHELQSFLKTARKKHKSSSDAHSSPGPEGCGSDASQFAESHSANLDLSGLEPILVESDSSSGGELEAGELVIDDSYREIKKKKKSKKSKKKKDKEKHKEKRHSKSKRSLGLSAVPVGEVTVTSGPPPSIPYAGAAAPPLPLPGLHTDGHSEKKKKKEEKDKERERGEKPKKKNMSAYQVFCKEYRVTIVADHPGIDFGELSKKLAEVWKQLPEKDKLIWKQKAQYLQHKQNKAEATTVKRKASSSEGSMKVKASSVGVLSPQKKSPPTTMLLPASPAKAPETEPIDVAAHLQLLGESLSLIGHRLQETEGMVAVSGSLSVLLDSIICALGPLACLTTQLPELNGCPKQVLSNTLDNIAYIMPGL</sequence>
<keyword id="KW-0238">DNA-binding</keyword>
<keyword id="KW-1017">Isopeptide bond</keyword>
<keyword id="KW-0539">Nucleus</keyword>
<keyword id="KW-0597">Phosphoprotein</keyword>
<keyword id="KW-1267">Proteomics identification</keyword>
<keyword id="KW-1185">Reference proteome</keyword>
<keyword id="KW-0832">Ubl conjugation</keyword>
<keyword id="KW-0879">Wnt signaling pathway</keyword>
<accession>Q9UGU5</accession>
<accession>O75672</accession>
<accession>O75673</accession>
<accession>Q9UMT5</accession>
<dbReference type="EMBL" id="AL079310">
    <property type="protein sequence ID" value="CAB45240.1"/>
    <property type="status" value="ALT_SEQ"/>
    <property type="molecule type" value="mRNA"/>
</dbReference>
<dbReference type="EMBL" id="CR456504">
    <property type="protein sequence ID" value="CAG30390.1"/>
    <property type="molecule type" value="mRNA"/>
</dbReference>
<dbReference type="EMBL" id="AL008635">
    <property type="status" value="NOT_ANNOTATED_CDS"/>
    <property type="molecule type" value="Genomic_DNA"/>
</dbReference>
<dbReference type="EMBL" id="AJ010070">
    <property type="protein sequence ID" value="CAA08992.1"/>
    <property type="molecule type" value="mRNA"/>
</dbReference>
<dbReference type="EMBL" id="AJ010069">
    <property type="protein sequence ID" value="CAA08991.1"/>
    <property type="molecule type" value="mRNA"/>
</dbReference>
<dbReference type="CCDS" id="CCDS33641.1"/>
<dbReference type="RefSeq" id="NP_001003681.1">
    <property type="nucleotide sequence ID" value="NM_001003681.3"/>
</dbReference>
<dbReference type="RefSeq" id="XP_006724165.1">
    <property type="nucleotide sequence ID" value="XM_006724102.1"/>
</dbReference>
<dbReference type="RefSeq" id="XP_047297023.1">
    <property type="nucleotide sequence ID" value="XM_047441067.1"/>
</dbReference>
<dbReference type="SMR" id="Q9UGU5"/>
<dbReference type="BioGRID" id="115353">
    <property type="interactions" value="118"/>
</dbReference>
<dbReference type="DIP" id="DIP-60550N"/>
<dbReference type="FunCoup" id="Q9UGU5">
    <property type="interactions" value="1350"/>
</dbReference>
<dbReference type="IntAct" id="Q9UGU5">
    <property type="interactions" value="59"/>
</dbReference>
<dbReference type="MINT" id="Q9UGU5"/>
<dbReference type="STRING" id="9606.ENSP00000216106"/>
<dbReference type="GlyGen" id="Q9UGU5">
    <property type="glycosylation" value="1 site, 1 O-linked glycan (1 site)"/>
</dbReference>
<dbReference type="iPTMnet" id="Q9UGU5"/>
<dbReference type="PhosphoSitePlus" id="Q9UGU5"/>
<dbReference type="BioMuta" id="HMGXB4"/>
<dbReference type="DMDM" id="61252700"/>
<dbReference type="jPOST" id="Q9UGU5"/>
<dbReference type="MassIVE" id="Q9UGU5"/>
<dbReference type="PaxDb" id="9606-ENSP00000216106"/>
<dbReference type="PeptideAtlas" id="Q9UGU5"/>
<dbReference type="ProteomicsDB" id="84266"/>
<dbReference type="Pumba" id="Q9UGU5"/>
<dbReference type="Antibodypedia" id="247">
    <property type="antibodies" value="194 antibodies from 18 providers"/>
</dbReference>
<dbReference type="DNASU" id="10042"/>
<dbReference type="Ensembl" id="ENST00000216106.6">
    <property type="protein sequence ID" value="ENSP00000216106.5"/>
    <property type="gene ID" value="ENSG00000100281.14"/>
</dbReference>
<dbReference type="GeneID" id="10042"/>
<dbReference type="KEGG" id="hsa:10042"/>
<dbReference type="MANE-Select" id="ENST00000216106.6">
    <property type="protein sequence ID" value="ENSP00000216106.5"/>
    <property type="RefSeq nucleotide sequence ID" value="NM_001003681.3"/>
    <property type="RefSeq protein sequence ID" value="NP_001003681.1"/>
</dbReference>
<dbReference type="UCSC" id="uc003anl.4">
    <property type="organism name" value="human"/>
</dbReference>
<dbReference type="AGR" id="HGNC:5003"/>
<dbReference type="CTD" id="10042"/>
<dbReference type="DisGeNET" id="10042"/>
<dbReference type="GeneCards" id="HMGXB4"/>
<dbReference type="HGNC" id="HGNC:5003">
    <property type="gene designation" value="HMGXB4"/>
</dbReference>
<dbReference type="HPA" id="ENSG00000100281">
    <property type="expression patterns" value="Low tissue specificity"/>
</dbReference>
<dbReference type="MIM" id="604702">
    <property type="type" value="gene"/>
</dbReference>
<dbReference type="neXtProt" id="NX_Q9UGU5"/>
<dbReference type="OpenTargets" id="ENSG00000100281"/>
<dbReference type="PharmGKB" id="PA164720673"/>
<dbReference type="VEuPathDB" id="HostDB:ENSG00000100281"/>
<dbReference type="eggNOG" id="ENOG502QSH9">
    <property type="taxonomic scope" value="Eukaryota"/>
</dbReference>
<dbReference type="GeneTree" id="ENSGT00390000012436"/>
<dbReference type="HOGENOM" id="CLU_032486_0_0_1"/>
<dbReference type="InParanoid" id="Q9UGU5"/>
<dbReference type="OMA" id="HKSVERS"/>
<dbReference type="OrthoDB" id="4777606at2759"/>
<dbReference type="PAN-GO" id="Q9UGU5">
    <property type="GO annotations" value="0 GO annotations based on evolutionary models"/>
</dbReference>
<dbReference type="PhylomeDB" id="Q9UGU5"/>
<dbReference type="TreeFam" id="TF106404"/>
<dbReference type="PathwayCommons" id="Q9UGU5"/>
<dbReference type="SignaLink" id="Q9UGU5"/>
<dbReference type="BioGRID-ORCS" id="10042">
    <property type="hits" value="18 hits in 1173 CRISPR screens"/>
</dbReference>
<dbReference type="ChiTaRS" id="HMGXB4">
    <property type="organism name" value="human"/>
</dbReference>
<dbReference type="GenomeRNAi" id="10042"/>
<dbReference type="Pharos" id="Q9UGU5">
    <property type="development level" value="Tbio"/>
</dbReference>
<dbReference type="PRO" id="PR:Q9UGU5"/>
<dbReference type="Proteomes" id="UP000005640">
    <property type="component" value="Chromosome 22"/>
</dbReference>
<dbReference type="RNAct" id="Q9UGU5">
    <property type="molecule type" value="protein"/>
</dbReference>
<dbReference type="Bgee" id="ENSG00000100281">
    <property type="expression patterns" value="Expressed in oocyte and 215 other cell types or tissues"/>
</dbReference>
<dbReference type="ExpressionAtlas" id="Q9UGU5">
    <property type="expression patterns" value="baseline and differential"/>
</dbReference>
<dbReference type="GO" id="GO:0016589">
    <property type="term" value="C:NURF complex"/>
    <property type="evidence" value="ECO:0000314"/>
    <property type="project" value="UniProtKB"/>
</dbReference>
<dbReference type="GO" id="GO:0003677">
    <property type="term" value="F:DNA binding"/>
    <property type="evidence" value="ECO:0007669"/>
    <property type="project" value="UniProtKB-KW"/>
</dbReference>
<dbReference type="GO" id="GO:0042802">
    <property type="term" value="F:identical protein binding"/>
    <property type="evidence" value="ECO:0000353"/>
    <property type="project" value="IntAct"/>
</dbReference>
<dbReference type="GO" id="GO:0008333">
    <property type="term" value="P:endosome to lysosome transport"/>
    <property type="evidence" value="ECO:0000303"/>
    <property type="project" value="UniProtKB"/>
</dbReference>
<dbReference type="GO" id="GO:0030178">
    <property type="term" value="P:negative regulation of Wnt signaling pathway"/>
    <property type="evidence" value="ECO:0000250"/>
    <property type="project" value="UniProtKB"/>
</dbReference>
<dbReference type="GO" id="GO:0016055">
    <property type="term" value="P:Wnt signaling pathway"/>
    <property type="evidence" value="ECO:0007669"/>
    <property type="project" value="UniProtKB-KW"/>
</dbReference>
<dbReference type="CDD" id="cd21982">
    <property type="entry name" value="HMG-box_HMGXB4"/>
    <property type="match status" value="1"/>
</dbReference>
<dbReference type="FunFam" id="1.10.30.10:FF:000030">
    <property type="entry name" value="HMG domain-containing protein 4 isoform X1"/>
    <property type="match status" value="1"/>
</dbReference>
<dbReference type="Gene3D" id="1.10.30.10">
    <property type="entry name" value="High mobility group box domain"/>
    <property type="match status" value="1"/>
</dbReference>
<dbReference type="InterPro" id="IPR025228">
    <property type="entry name" value="DUF4171"/>
</dbReference>
<dbReference type="InterPro" id="IPR009071">
    <property type="entry name" value="HMG_box_dom"/>
</dbReference>
<dbReference type="InterPro" id="IPR036910">
    <property type="entry name" value="HMG_box_dom_sf"/>
</dbReference>
<dbReference type="InterPro" id="IPR042477">
    <property type="entry name" value="HMGXB4"/>
</dbReference>
<dbReference type="InterPro" id="IPR048016">
    <property type="entry name" value="HMGXB4_HMG-box"/>
</dbReference>
<dbReference type="PANTHER" id="PTHR46584">
    <property type="entry name" value="HMG DOMAIN-CONTAINING PROTEIN 4"/>
    <property type="match status" value="1"/>
</dbReference>
<dbReference type="PANTHER" id="PTHR46584:SF1">
    <property type="entry name" value="HMG DOMAIN-CONTAINING PROTEIN 4"/>
    <property type="match status" value="1"/>
</dbReference>
<dbReference type="Pfam" id="PF13775">
    <property type="entry name" value="DUF4171"/>
    <property type="match status" value="1"/>
</dbReference>
<dbReference type="Pfam" id="PF00505">
    <property type="entry name" value="HMG_box"/>
    <property type="match status" value="1"/>
</dbReference>
<dbReference type="SMART" id="SM00398">
    <property type="entry name" value="HMG"/>
    <property type="match status" value="1"/>
</dbReference>
<dbReference type="SUPFAM" id="SSF47095">
    <property type="entry name" value="HMG-box"/>
    <property type="match status" value="1"/>
</dbReference>
<dbReference type="PROSITE" id="PS50118">
    <property type="entry name" value="HMG_BOX_2"/>
    <property type="match status" value="1"/>
</dbReference>
<comment type="function">
    <text evidence="1">Negatively regulates Wnt/beta-catenin signaling during development.</text>
</comment>
<comment type="interaction">
    <interactant intactId="EBI-7261162">
        <id>Q9UGU5</id>
    </interactant>
    <interactant intactId="EBI-1042725">
        <id>Q02040</id>
        <label>AKAP17A</label>
    </interactant>
    <organismsDiffer>false</organismsDiffer>
    <experiments>3</experiments>
</comment>
<comment type="interaction">
    <interactant intactId="EBI-7261162">
        <id>Q9UGU5</id>
    </interactant>
    <interactant intactId="EBI-10175300">
        <id>Q8TD31-3</id>
        <label>CCHCR1</label>
    </interactant>
    <organismsDiffer>false</organismsDiffer>
    <experiments>3</experiments>
</comment>
<comment type="interaction">
    <interactant intactId="EBI-7261162">
        <id>Q9UGU5</id>
    </interactant>
    <interactant intactId="EBI-744099">
        <id>Q9H0I2</id>
        <label>ENKD1</label>
    </interactant>
    <organismsDiffer>false</organismsDiffer>
    <experiments>3</experiments>
</comment>
<comment type="interaction">
    <interactant intactId="EBI-7261162">
        <id>Q9UGU5</id>
    </interactant>
    <interactant intactId="EBI-7261162">
        <id>Q9UGU5</id>
        <label>HMGXB4</label>
    </interactant>
    <organismsDiffer>false</organismsDiffer>
    <experiments>3</experiments>
</comment>
<comment type="interaction">
    <interactant intactId="EBI-7261162">
        <id>Q9UGU5</id>
    </interactant>
    <interactant intactId="EBI-715611">
        <id>Q9C086</id>
        <label>INO80B</label>
    </interactant>
    <organismsDiffer>false</organismsDiffer>
    <experiments>3</experiments>
</comment>
<comment type="interaction">
    <interactant intactId="EBI-7261162">
        <id>Q9UGU5</id>
    </interactant>
    <interactant intactId="EBI-739546">
        <id>Q96PV6</id>
        <label>LENG8</label>
    </interactant>
    <organismsDiffer>false</organismsDiffer>
    <experiments>3</experiments>
</comment>
<comment type="interaction">
    <interactant intactId="EBI-7261162">
        <id>Q9UGU5</id>
    </interactant>
    <interactant intactId="EBI-3920396">
        <id>Q6ZUT1</id>
        <label>NKAPD1</label>
    </interactant>
    <organismsDiffer>false</organismsDiffer>
    <experiments>3</experiments>
</comment>
<comment type="interaction">
    <interactant intactId="EBI-7261162">
        <id>Q9UGU5</id>
    </interactant>
    <interactant intactId="EBI-348567">
        <id>O75928-2</id>
        <label>PIAS2</label>
    </interactant>
    <organismsDiffer>false</organismsDiffer>
    <experiments>3</experiments>
</comment>
<comment type="interaction">
    <interactant intactId="EBI-7261162">
        <id>Q9UGU5</id>
    </interactant>
    <interactant intactId="EBI-745680">
        <id>Q96MF2</id>
        <label>STAC3</label>
    </interactant>
    <organismsDiffer>false</organismsDiffer>
    <experiments>3</experiments>
</comment>
<comment type="interaction">
    <interactant intactId="EBI-7261162">
        <id>Q9UGU5</id>
    </interactant>
    <interactant intactId="EBI-740355">
        <id>Q96SI9</id>
        <label>STRBP</label>
    </interactant>
    <organismsDiffer>false</organismsDiffer>
    <experiments>3</experiments>
</comment>
<comment type="interaction">
    <interactant intactId="EBI-7261162">
        <id>Q9UGU5</id>
    </interactant>
    <interactant intactId="EBI-752030">
        <id>Q96A09</id>
        <label>TENT5B</label>
    </interactant>
    <organismsDiffer>false</organismsDiffer>
    <experiments>3</experiments>
</comment>
<comment type="interaction">
    <interactant intactId="EBI-7261162">
        <id>Q9UGU5</id>
    </interactant>
    <interactant intactId="EBI-947459">
        <id>Q9H2G4</id>
        <label>TSPYL2</label>
    </interactant>
    <organismsDiffer>false</organismsDiffer>
    <experiments>3</experiments>
</comment>
<comment type="interaction">
    <interactant intactId="EBI-7261162">
        <id>Q9UGU5</id>
    </interactant>
    <interactant intactId="EBI-10180829">
        <id>Q7KZS0</id>
        <label>UBE2I</label>
    </interactant>
    <organismsDiffer>false</organismsDiffer>
    <experiments>3</experiments>
</comment>
<comment type="interaction">
    <interactant intactId="EBI-7261162">
        <id>Q9UGU5</id>
    </interactant>
    <interactant intactId="EBI-607755">
        <id>Q9BZL1</id>
        <label>UBL5</label>
    </interactant>
    <organismsDiffer>false</organismsDiffer>
    <experiments>3</experiments>
</comment>
<comment type="interaction">
    <interactant intactId="EBI-7261162">
        <id>Q9UGU5</id>
    </interactant>
    <interactant intactId="EBI-597063">
        <id>Q8TBK6</id>
        <label>ZCCHC10</label>
    </interactant>
    <organismsDiffer>false</organismsDiffer>
    <experiments>5</experiments>
</comment>
<comment type="subcellular location">
    <subcellularLocation>
        <location evidence="2">Nucleus</location>
    </subcellularLocation>
</comment>
<protein>
    <recommendedName>
        <fullName>HMG domain-containing protein 4</fullName>
    </recommendedName>
    <alternativeName>
        <fullName>HMG box-containing protein 4</fullName>
    </alternativeName>
    <alternativeName>
        <fullName>High mobility group protein 2-like 1</fullName>
    </alternativeName>
    <alternativeName>
        <fullName>Protein HMGBCG</fullName>
    </alternativeName>
</protein>
<gene>
    <name type="primary">HMGXB4</name>
    <name type="synonym">HMG2L1</name>
    <name type="synonym">HMGBCG</name>
</gene>
<reference key="1">
    <citation type="journal article" date="2003" name="Genome Res.">
        <title>Reevaluating human gene annotation: a second-generation analysis of chromosome 22.</title>
        <authorList>
            <person name="Collins J.E."/>
            <person name="Goward M.E."/>
            <person name="Cole C.G."/>
            <person name="Smink L.J."/>
            <person name="Huckle E.J."/>
            <person name="Knowles S."/>
            <person name="Bye J.M."/>
            <person name="Beare D.M."/>
            <person name="Dunham I."/>
        </authorList>
    </citation>
    <scope>NUCLEOTIDE SEQUENCE [LARGE SCALE MRNA]</scope>
</reference>
<reference key="2">
    <citation type="journal article" date="2004" name="Genome Biol.">
        <title>A genome annotation-driven approach to cloning the human ORFeome.</title>
        <authorList>
            <person name="Collins J.E."/>
            <person name="Wright C.L."/>
            <person name="Edwards C.A."/>
            <person name="Davis M.P."/>
            <person name="Grinham J.A."/>
            <person name="Cole C.G."/>
            <person name="Goward M.E."/>
            <person name="Aguado B."/>
            <person name="Mallya M."/>
            <person name="Mokrab Y."/>
            <person name="Huckle E.J."/>
            <person name="Beare D.M."/>
            <person name="Dunham I."/>
        </authorList>
    </citation>
    <scope>NUCLEOTIDE SEQUENCE [LARGE SCALE MRNA]</scope>
</reference>
<reference key="3">
    <citation type="journal article" date="1999" name="Nature">
        <title>The DNA sequence of human chromosome 22.</title>
        <authorList>
            <person name="Dunham I."/>
            <person name="Hunt A.R."/>
            <person name="Collins J.E."/>
            <person name="Bruskiewich R."/>
            <person name="Beare D.M."/>
            <person name="Clamp M."/>
            <person name="Smink L.J."/>
            <person name="Ainscough R."/>
            <person name="Almeida J.P."/>
            <person name="Babbage A.K."/>
            <person name="Bagguley C."/>
            <person name="Bailey J."/>
            <person name="Barlow K.F."/>
            <person name="Bates K.N."/>
            <person name="Beasley O.P."/>
            <person name="Bird C.P."/>
            <person name="Blakey S.E."/>
            <person name="Bridgeman A.M."/>
            <person name="Buck D."/>
            <person name="Burgess J."/>
            <person name="Burrill W.D."/>
            <person name="Burton J."/>
            <person name="Carder C."/>
            <person name="Carter N.P."/>
            <person name="Chen Y."/>
            <person name="Clark G."/>
            <person name="Clegg S.M."/>
            <person name="Cobley V.E."/>
            <person name="Cole C.G."/>
            <person name="Collier R.E."/>
            <person name="Connor R."/>
            <person name="Conroy D."/>
            <person name="Corby N.R."/>
            <person name="Coville G.J."/>
            <person name="Cox A.V."/>
            <person name="Davis J."/>
            <person name="Dawson E."/>
            <person name="Dhami P.D."/>
            <person name="Dockree C."/>
            <person name="Dodsworth S.J."/>
            <person name="Durbin R.M."/>
            <person name="Ellington A.G."/>
            <person name="Evans K.L."/>
            <person name="Fey J.M."/>
            <person name="Fleming K."/>
            <person name="French L."/>
            <person name="Garner A.A."/>
            <person name="Gilbert J.G.R."/>
            <person name="Goward M.E."/>
            <person name="Grafham D.V."/>
            <person name="Griffiths M.N.D."/>
            <person name="Hall C."/>
            <person name="Hall R.E."/>
            <person name="Hall-Tamlyn G."/>
            <person name="Heathcott R.W."/>
            <person name="Ho S."/>
            <person name="Holmes S."/>
            <person name="Hunt S.E."/>
            <person name="Jones M.C."/>
            <person name="Kershaw J."/>
            <person name="Kimberley A.M."/>
            <person name="King A."/>
            <person name="Laird G.K."/>
            <person name="Langford C.F."/>
            <person name="Leversha M.A."/>
            <person name="Lloyd C."/>
            <person name="Lloyd D.M."/>
            <person name="Martyn I.D."/>
            <person name="Mashreghi-Mohammadi M."/>
            <person name="Matthews L.H."/>
            <person name="Mccann O.T."/>
            <person name="Mcclay J."/>
            <person name="Mclaren S."/>
            <person name="McMurray A.A."/>
            <person name="Milne S.A."/>
            <person name="Mortimore B.J."/>
            <person name="Odell C.N."/>
            <person name="Pavitt R."/>
            <person name="Pearce A.V."/>
            <person name="Pearson D."/>
            <person name="Phillimore B.J.C.T."/>
            <person name="Phillips S.H."/>
            <person name="Plumb R.W."/>
            <person name="Ramsay H."/>
            <person name="Ramsey Y."/>
            <person name="Rogers L."/>
            <person name="Ross M.T."/>
            <person name="Scott C.E."/>
            <person name="Sehra H.K."/>
            <person name="Skuce C.D."/>
            <person name="Smalley S."/>
            <person name="Smith M.L."/>
            <person name="Soderlund C."/>
            <person name="Spragon L."/>
            <person name="Steward C.A."/>
            <person name="Sulston J.E."/>
            <person name="Swann R.M."/>
            <person name="Vaudin M."/>
            <person name="Wall M."/>
            <person name="Wallis J.M."/>
            <person name="Whiteley M.N."/>
            <person name="Willey D.L."/>
            <person name="Williams L."/>
            <person name="Williams S.A."/>
            <person name="Williamson H."/>
            <person name="Wilmer T.E."/>
            <person name="Wilming L."/>
            <person name="Wright C.L."/>
            <person name="Hubbard T."/>
            <person name="Bentley D.R."/>
            <person name="Beck S."/>
            <person name="Rogers J."/>
            <person name="Shimizu N."/>
            <person name="Minoshima S."/>
            <person name="Kawasaki K."/>
            <person name="Sasaki T."/>
            <person name="Asakawa S."/>
            <person name="Kudoh J."/>
            <person name="Shintani A."/>
            <person name="Shibuya K."/>
            <person name="Yoshizaki Y."/>
            <person name="Aoki N."/>
            <person name="Mitsuyama S."/>
            <person name="Roe B.A."/>
            <person name="Chen F."/>
            <person name="Chu L."/>
            <person name="Crabtree J."/>
            <person name="Deschamps S."/>
            <person name="Do A."/>
            <person name="Do T."/>
            <person name="Dorman A."/>
            <person name="Fang F."/>
            <person name="Fu Y."/>
            <person name="Hu P."/>
            <person name="Hua A."/>
            <person name="Kenton S."/>
            <person name="Lai H."/>
            <person name="Lao H.I."/>
            <person name="Lewis J."/>
            <person name="Lewis S."/>
            <person name="Lin S.-P."/>
            <person name="Loh P."/>
            <person name="Malaj E."/>
            <person name="Nguyen T."/>
            <person name="Pan H."/>
            <person name="Phan S."/>
            <person name="Qi S."/>
            <person name="Qian Y."/>
            <person name="Ray L."/>
            <person name="Ren Q."/>
            <person name="Shaull S."/>
            <person name="Sloan D."/>
            <person name="Song L."/>
            <person name="Wang Q."/>
            <person name="Wang Y."/>
            <person name="Wang Z."/>
            <person name="White J."/>
            <person name="Willingham D."/>
            <person name="Wu H."/>
            <person name="Yao Z."/>
            <person name="Zhan M."/>
            <person name="Zhang G."/>
            <person name="Chissoe S."/>
            <person name="Murray J."/>
            <person name="Miller N."/>
            <person name="Minx P."/>
            <person name="Fulton R."/>
            <person name="Johnson D."/>
            <person name="Bemis G."/>
            <person name="Bentley D."/>
            <person name="Bradshaw H."/>
            <person name="Bourne S."/>
            <person name="Cordes M."/>
            <person name="Du Z."/>
            <person name="Fulton L."/>
            <person name="Goela D."/>
            <person name="Graves T."/>
            <person name="Hawkins J."/>
            <person name="Hinds K."/>
            <person name="Kemp K."/>
            <person name="Latreille P."/>
            <person name="Layman D."/>
            <person name="Ozersky P."/>
            <person name="Rohlfing T."/>
            <person name="Scheet P."/>
            <person name="Walker C."/>
            <person name="Wamsley A."/>
            <person name="Wohldmann P."/>
            <person name="Pepin K."/>
            <person name="Nelson J."/>
            <person name="Korf I."/>
            <person name="Bedell J.A."/>
            <person name="Hillier L.W."/>
            <person name="Mardis E."/>
            <person name="Waterston R."/>
            <person name="Wilson R."/>
            <person name="Emanuel B.S."/>
            <person name="Shaikh T."/>
            <person name="Kurahashi H."/>
            <person name="Saitta S."/>
            <person name="Budarf M.L."/>
            <person name="McDermid H.E."/>
            <person name="Johnson A."/>
            <person name="Wong A.C.C."/>
            <person name="Morrow B.E."/>
            <person name="Edelmann L."/>
            <person name="Kim U.J."/>
            <person name="Shizuya H."/>
            <person name="Simon M.I."/>
            <person name="Dumanski J.P."/>
            <person name="Peyrard M."/>
            <person name="Kedra D."/>
            <person name="Seroussi E."/>
            <person name="Fransson I."/>
            <person name="Tapia I."/>
            <person name="Bruder C.E."/>
            <person name="O'Brien K.P."/>
            <person name="Wilkinson P."/>
            <person name="Bodenteich A."/>
            <person name="Hartman K."/>
            <person name="Hu X."/>
            <person name="Khan A.S."/>
            <person name="Lane L."/>
            <person name="Tilahun Y."/>
            <person name="Wright H."/>
        </authorList>
    </citation>
    <scope>NUCLEOTIDE SEQUENCE [LARGE SCALE GENOMIC DNA]</scope>
</reference>
<reference key="4">
    <citation type="journal article" date="1999" name="Genomics">
        <title>TOM1 genes map to human chromosome 22q13.1 and mouse chromosome 8C1 and encode proteins similar to the endosomal proteins HGS and STAM.</title>
        <authorList>
            <person name="Seroussi E."/>
            <person name="Kedra D."/>
            <person name="Kost-Alimova M."/>
            <person name="Sandberg-Nordqvist A.-C."/>
            <person name="Fransson I."/>
            <person name="Jacobs J.F.M."/>
            <person name="Fu Y."/>
            <person name="Pan H.-Q."/>
            <person name="Roe B.A."/>
            <person name="Imreh S."/>
            <person name="Dumanski J.P."/>
        </authorList>
    </citation>
    <scope>NUCLEOTIDE SEQUENCE [MRNA] OF 1-390 AND 406-601</scope>
</reference>
<reference key="5">
    <citation type="journal article" date="2009" name="Sci. Signal.">
        <title>Quantitative phosphoproteomic analysis of T cell receptor signaling reveals system-wide modulation of protein-protein interactions.</title>
        <authorList>
            <person name="Mayya V."/>
            <person name="Lundgren D.H."/>
            <person name="Hwang S.-I."/>
            <person name="Rezaul K."/>
            <person name="Wu L."/>
            <person name="Eng J.K."/>
            <person name="Rodionov V."/>
            <person name="Han D.K."/>
        </authorList>
    </citation>
    <scope>IDENTIFICATION BY MASS SPECTROMETRY [LARGE SCALE ANALYSIS]</scope>
    <source>
        <tissue>Leukemic T-cell</tissue>
    </source>
</reference>
<reference key="6">
    <citation type="journal article" date="2010" name="Sci. Signal.">
        <title>Quantitative phosphoproteomics reveals widespread full phosphorylation site occupancy during mitosis.</title>
        <authorList>
            <person name="Olsen J.V."/>
            <person name="Vermeulen M."/>
            <person name="Santamaria A."/>
            <person name="Kumar C."/>
            <person name="Miller M.L."/>
            <person name="Jensen L.J."/>
            <person name="Gnad F."/>
            <person name="Cox J."/>
            <person name="Jensen T.S."/>
            <person name="Nigg E.A."/>
            <person name="Brunak S."/>
            <person name="Mann M."/>
        </authorList>
    </citation>
    <scope>PHOSPHORYLATION [LARGE SCALE ANALYSIS] AT SER-502 AND SER-512</scope>
    <scope>IDENTIFICATION BY MASS SPECTROMETRY [LARGE SCALE ANALYSIS]</scope>
    <source>
        <tissue>Cervix carcinoma</tissue>
    </source>
</reference>
<reference key="7">
    <citation type="journal article" date="2011" name="Sci. Signal.">
        <title>System-wide temporal characterization of the proteome and phosphoproteome of human embryonic stem cell differentiation.</title>
        <authorList>
            <person name="Rigbolt K.T."/>
            <person name="Prokhorova T.A."/>
            <person name="Akimov V."/>
            <person name="Henningsen J."/>
            <person name="Johansen P.T."/>
            <person name="Kratchmarova I."/>
            <person name="Kassem M."/>
            <person name="Mann M."/>
            <person name="Olsen J.V."/>
            <person name="Blagoev B."/>
        </authorList>
    </citation>
    <scope>PHOSPHORYLATION [LARGE SCALE ANALYSIS] AT SER-197; SER-497; SER-502 AND SER-512</scope>
    <scope>IDENTIFICATION BY MASS SPECTROMETRY [LARGE SCALE ANALYSIS]</scope>
</reference>
<reference key="8">
    <citation type="journal article" date="2013" name="J. Proteome Res.">
        <title>Toward a comprehensive characterization of a human cancer cell phosphoproteome.</title>
        <authorList>
            <person name="Zhou H."/>
            <person name="Di Palma S."/>
            <person name="Preisinger C."/>
            <person name="Peng M."/>
            <person name="Polat A.N."/>
            <person name="Heck A.J."/>
            <person name="Mohammed S."/>
        </authorList>
    </citation>
    <scope>PHOSPHORYLATION [LARGE SCALE ANALYSIS] AT SER-102; SER-497; SER-502 AND SER-512</scope>
    <scope>IDENTIFICATION BY MASS SPECTROMETRY [LARGE SCALE ANALYSIS]</scope>
    <source>
        <tissue>Cervix carcinoma</tissue>
        <tissue>Erythroleukemia</tissue>
    </source>
</reference>
<reference key="9">
    <citation type="journal article" date="2014" name="J. Proteomics">
        <title>An enzyme assisted RP-RPLC approach for in-depth analysis of human liver phosphoproteome.</title>
        <authorList>
            <person name="Bian Y."/>
            <person name="Song C."/>
            <person name="Cheng K."/>
            <person name="Dong M."/>
            <person name="Wang F."/>
            <person name="Huang J."/>
            <person name="Sun D."/>
            <person name="Wang L."/>
            <person name="Ye M."/>
            <person name="Zou H."/>
        </authorList>
    </citation>
    <scope>IDENTIFICATION BY MASS SPECTROMETRY [LARGE SCALE ANALYSIS]</scope>
    <source>
        <tissue>Liver</tissue>
    </source>
</reference>
<reference key="10">
    <citation type="journal article" date="2017" name="Nat. Struct. Mol. Biol.">
        <title>Site-specific mapping of the human SUMO proteome reveals co-modification with phosphorylation.</title>
        <authorList>
            <person name="Hendriks I.A."/>
            <person name="Lyon D."/>
            <person name="Young C."/>
            <person name="Jensen L.J."/>
            <person name="Vertegaal A.C."/>
            <person name="Nielsen M.L."/>
        </authorList>
    </citation>
    <scope>SUMOYLATION [LARGE SCALE ANALYSIS] AT LYS-8 AND LYS-191</scope>
    <scope>IDENTIFICATION BY MASS SPECTROMETRY [LARGE SCALE ANALYSIS]</scope>
</reference>
<feature type="chain" id="PRO_0000048542" description="HMG domain-containing protein 4">
    <location>
        <begin position="1"/>
        <end position="601"/>
    </location>
</feature>
<feature type="DNA-binding region" description="HMG box" evidence="2">
    <location>
        <begin position="407"/>
        <end position="475"/>
    </location>
</feature>
<feature type="region of interest" description="Disordered" evidence="3">
    <location>
        <begin position="51"/>
        <end position="410"/>
    </location>
</feature>
<feature type="region of interest" description="Disordered" evidence="3">
    <location>
        <begin position="473"/>
        <end position="514"/>
    </location>
</feature>
<feature type="compositionally biased region" description="Low complexity" evidence="3">
    <location>
        <begin position="82"/>
        <end position="93"/>
    </location>
</feature>
<feature type="compositionally biased region" description="Polar residues" evidence="3">
    <location>
        <begin position="212"/>
        <end position="221"/>
    </location>
</feature>
<feature type="compositionally biased region" description="Polar residues" evidence="3">
    <location>
        <begin position="270"/>
        <end position="282"/>
    </location>
</feature>
<feature type="compositionally biased region" description="Basic residues" evidence="3">
    <location>
        <begin position="316"/>
        <end position="344"/>
    </location>
</feature>
<feature type="compositionally biased region" description="Basic and acidic residues" evidence="3">
    <location>
        <begin position="394"/>
        <end position="404"/>
    </location>
</feature>
<feature type="modified residue" description="Phosphoserine" evidence="7">
    <location>
        <position position="102"/>
    </location>
</feature>
<feature type="modified residue" description="Phosphoserine" evidence="6">
    <location>
        <position position="197"/>
    </location>
</feature>
<feature type="modified residue" description="Phosphoserine" evidence="6 7">
    <location>
        <position position="497"/>
    </location>
</feature>
<feature type="modified residue" description="Phosphoserine" evidence="5 6 7">
    <location>
        <position position="502"/>
    </location>
</feature>
<feature type="modified residue" description="Phosphoserine" evidence="5 6 7">
    <location>
        <position position="512"/>
    </location>
</feature>
<feature type="cross-link" description="Glycyl lysine isopeptide (Lys-Gly) (interchain with G-Cter in SUMO2)" evidence="8">
    <location>
        <position position="8"/>
    </location>
</feature>
<feature type="cross-link" description="Glycyl lysine isopeptide (Lys-Gly) (interchain with G-Cter in SUMO2)" evidence="8">
    <location>
        <position position="191"/>
    </location>
</feature>
<feature type="sequence variant" id="VAR_049559" description="In dbSNP:rs1053593.">
    <original>G</original>
    <variation>V</variation>
    <location>
        <position position="165"/>
    </location>
</feature>
<feature type="sequence conflict" description="In Ref. 4; CAA08992." evidence="4" ref="4">
    <original>K</original>
    <variation>R</variation>
    <location>
        <position position="201"/>
    </location>
</feature>